<organism>
    <name type="scientific">Arabidopsis thaliana</name>
    <name type="common">Mouse-ear cress</name>
    <dbReference type="NCBI Taxonomy" id="3702"/>
    <lineage>
        <taxon>Eukaryota</taxon>
        <taxon>Viridiplantae</taxon>
        <taxon>Streptophyta</taxon>
        <taxon>Embryophyta</taxon>
        <taxon>Tracheophyta</taxon>
        <taxon>Spermatophyta</taxon>
        <taxon>Magnoliopsida</taxon>
        <taxon>eudicotyledons</taxon>
        <taxon>Gunneridae</taxon>
        <taxon>Pentapetalae</taxon>
        <taxon>rosids</taxon>
        <taxon>malvids</taxon>
        <taxon>Brassicales</taxon>
        <taxon>Brassicaceae</taxon>
        <taxon>Camelineae</taxon>
        <taxon>Arabidopsis</taxon>
    </lineage>
</organism>
<gene>
    <name type="primary">QCR9</name>
    <name evidence="6" type="ordered locus">At3g52730</name>
    <name evidence="7" type="ORF">F3C22.130</name>
</gene>
<feature type="chain" id="PRO_0000449253" description="Cytochrome b-c1 complex subunit 9, mitochondrial">
    <location>
        <begin position="1"/>
        <end position="72"/>
    </location>
</feature>
<feature type="topological domain" description="Mitochondrial matrix" evidence="1">
    <location>
        <begin position="1"/>
        <end position="25"/>
    </location>
</feature>
<feature type="transmembrane region" description="Helical" evidence="2">
    <location>
        <begin position="26"/>
        <end position="42"/>
    </location>
</feature>
<feature type="topological domain" description="Mitochondrial intermembrane" evidence="1">
    <location>
        <begin position="43"/>
        <end position="72"/>
    </location>
</feature>
<feature type="helix" evidence="8">
    <location>
        <begin position="14"/>
        <end position="20"/>
    </location>
</feature>
<feature type="helix" evidence="8">
    <location>
        <begin position="24"/>
        <end position="53"/>
    </location>
</feature>
<feature type="turn" evidence="8">
    <location>
        <begin position="54"/>
        <end position="56"/>
    </location>
</feature>
<feature type="helix" evidence="8">
    <location>
        <begin position="59"/>
        <end position="61"/>
    </location>
</feature>
<feature type="turn" evidence="8">
    <location>
        <begin position="63"/>
        <end position="66"/>
    </location>
</feature>
<proteinExistence type="evidence at protein level"/>
<protein>
    <recommendedName>
        <fullName>Cytochrome b-c1 complex subunit 9, mitochondrial</fullName>
    </recommendedName>
    <alternativeName>
        <fullName>Complex III subunit 9</fullName>
    </alternativeName>
    <alternativeName>
        <fullName>Complex III subunit X</fullName>
    </alternativeName>
    <alternativeName>
        <fullName>Ubiquinol-cytochrome c oxidoreductase subunit 9</fullName>
    </alternativeName>
</protein>
<dbReference type="EMBL" id="AL353912">
    <property type="protein sequence ID" value="CAB89234.1"/>
    <property type="molecule type" value="Genomic_DNA"/>
</dbReference>
<dbReference type="EMBL" id="CP002686">
    <property type="protein sequence ID" value="AEE78987.1"/>
    <property type="molecule type" value="Genomic_DNA"/>
</dbReference>
<dbReference type="EMBL" id="AY054592">
    <property type="protein sequence ID" value="AAK96783.1"/>
    <property type="molecule type" value="mRNA"/>
</dbReference>
<dbReference type="EMBL" id="BT000387">
    <property type="protein sequence ID" value="AAN15706.1"/>
    <property type="molecule type" value="mRNA"/>
</dbReference>
<dbReference type="PIR" id="T49026">
    <property type="entry name" value="T49026"/>
</dbReference>
<dbReference type="RefSeq" id="NP_190841.1">
    <property type="nucleotide sequence ID" value="NM_115133.3"/>
</dbReference>
<dbReference type="PDB" id="8BEL">
    <property type="method" value="EM"/>
    <property type="resolution" value="2.25 A"/>
    <property type="chains" value="I/S=1-72"/>
</dbReference>
<dbReference type="PDB" id="8BPX">
    <property type="method" value="EM"/>
    <property type="resolution" value="2.09 A"/>
    <property type="chains" value="AI/BI=1-72"/>
</dbReference>
<dbReference type="PDB" id="8BQ5">
    <property type="method" value="EM"/>
    <property type="resolution" value="2.73 A"/>
    <property type="chains" value="AI/BI=1-72"/>
</dbReference>
<dbReference type="PDB" id="8BQ6">
    <property type="method" value="EM"/>
    <property type="resolution" value="2.80 A"/>
    <property type="chains" value="AI/BI=1-72"/>
</dbReference>
<dbReference type="PDBsum" id="8BEL"/>
<dbReference type="PDBsum" id="8BPX"/>
<dbReference type="PDBsum" id="8BQ5"/>
<dbReference type="PDBsum" id="8BQ6"/>
<dbReference type="EMDB" id="EMD-16007"/>
<dbReference type="EMDB" id="EMD-16168"/>
<dbReference type="EMDB" id="EMD-16171"/>
<dbReference type="EMDB" id="EMD-16172"/>
<dbReference type="SMR" id="Q9LXJ2"/>
<dbReference type="FunCoup" id="Q9LXJ2">
    <property type="interactions" value="956"/>
</dbReference>
<dbReference type="IntAct" id="Q9LXJ2">
    <property type="interactions" value="1"/>
</dbReference>
<dbReference type="STRING" id="3702.Q9LXJ2"/>
<dbReference type="PaxDb" id="3702-AT3G52730.1"/>
<dbReference type="ProteomicsDB" id="181601"/>
<dbReference type="EnsemblPlants" id="AT3G52730.1">
    <property type="protein sequence ID" value="AT3G52730.1"/>
    <property type="gene ID" value="AT3G52730"/>
</dbReference>
<dbReference type="GeneID" id="824439"/>
<dbReference type="Gramene" id="AT3G52730.1">
    <property type="protein sequence ID" value="AT3G52730.1"/>
    <property type="gene ID" value="AT3G52730"/>
</dbReference>
<dbReference type="KEGG" id="ath:AT3G52730"/>
<dbReference type="Araport" id="AT3G52730"/>
<dbReference type="TAIR" id="AT3G52730"/>
<dbReference type="eggNOG" id="KOG3494">
    <property type="taxonomic scope" value="Eukaryota"/>
</dbReference>
<dbReference type="HOGENOM" id="CLU_171977_4_0_1"/>
<dbReference type="InParanoid" id="Q9LXJ2"/>
<dbReference type="OMA" id="YGFDRAW"/>
<dbReference type="PhylomeDB" id="Q9LXJ2"/>
<dbReference type="BioCyc" id="ARA:MONOMERQT-2772"/>
<dbReference type="BioCyc" id="MetaCyc:MONOMERQT-2772"/>
<dbReference type="PRO" id="PR:Q9LXJ2"/>
<dbReference type="Proteomes" id="UP000006548">
    <property type="component" value="Chromosome 3"/>
</dbReference>
<dbReference type="ExpressionAtlas" id="Q9LXJ2">
    <property type="expression patterns" value="baseline and differential"/>
</dbReference>
<dbReference type="GO" id="GO:0005829">
    <property type="term" value="C:cytosol"/>
    <property type="evidence" value="ECO:0007005"/>
    <property type="project" value="TAIR"/>
</dbReference>
<dbReference type="GO" id="GO:0005743">
    <property type="term" value="C:mitochondrial inner membrane"/>
    <property type="evidence" value="ECO:0007669"/>
    <property type="project" value="UniProtKB-SubCell"/>
</dbReference>
<dbReference type="GO" id="GO:0005739">
    <property type="term" value="C:mitochondrion"/>
    <property type="evidence" value="ECO:0007005"/>
    <property type="project" value="TAIR"/>
</dbReference>
<dbReference type="GO" id="GO:0045275">
    <property type="term" value="C:respiratory chain complex III"/>
    <property type="evidence" value="ECO:0007669"/>
    <property type="project" value="InterPro"/>
</dbReference>
<dbReference type="GO" id="GO:0006122">
    <property type="term" value="P:mitochondrial electron transport, ubiquinol to cytochrome c"/>
    <property type="evidence" value="ECO:0007669"/>
    <property type="project" value="InterPro"/>
</dbReference>
<dbReference type="FunFam" id="1.20.5.260:FF:000002">
    <property type="entry name" value="cytochrome b-c1 complex subunit 9"/>
    <property type="match status" value="1"/>
</dbReference>
<dbReference type="Gene3D" id="1.20.5.260">
    <property type="entry name" value="Cytochrome b-c1 complex subunit 9"/>
    <property type="match status" value="1"/>
</dbReference>
<dbReference type="InterPro" id="IPR008027">
    <property type="entry name" value="QCR9"/>
</dbReference>
<dbReference type="InterPro" id="IPR036656">
    <property type="entry name" value="QCR9_sf"/>
</dbReference>
<dbReference type="PANTHER" id="PTHR12980:SF0">
    <property type="entry name" value="CYTOCHROME B-C1 COMPLEX SUBUNIT 9"/>
    <property type="match status" value="1"/>
</dbReference>
<dbReference type="PANTHER" id="PTHR12980">
    <property type="entry name" value="UBIQUINOL-CYTOCHROME C REDUCTASE COMPLEX, SUBUNIT X"/>
    <property type="match status" value="1"/>
</dbReference>
<dbReference type="Pfam" id="PF05365">
    <property type="entry name" value="UCR_UQCRX_QCR9"/>
    <property type="match status" value="1"/>
</dbReference>
<dbReference type="SUPFAM" id="SSF81514">
    <property type="entry name" value="Subunit X (non-heme 7 kDa protein) of cytochrome bc1 complex (Ubiquinol-cytochrome c reductase)"/>
    <property type="match status" value="1"/>
</dbReference>
<accession>Q9LXJ2</accession>
<accession>A0A178VL42</accession>
<keyword id="KW-0002">3D-structure</keyword>
<keyword id="KW-0249">Electron transport</keyword>
<keyword id="KW-0472">Membrane</keyword>
<keyword id="KW-0496">Mitochondrion</keyword>
<keyword id="KW-0999">Mitochondrion inner membrane</keyword>
<keyword id="KW-1185">Reference proteome</keyword>
<keyword id="KW-0679">Respiratory chain</keyword>
<keyword id="KW-0812">Transmembrane</keyword>
<keyword id="KW-1133">Transmembrane helix</keyword>
<keyword id="KW-0813">Transport</keyword>
<sequence length="72" mass="8449">MEYAARRNQKGAFEGFYKLIMRRNSVYVTFIIAGAFFGERAVDYGVHKLWERNNVGKRYEDISVLGQRPVEE</sequence>
<evidence type="ECO:0000250" key="1">
    <source>
        <dbReference type="UniProtKB" id="P22289"/>
    </source>
</evidence>
<evidence type="ECO:0000255" key="2"/>
<evidence type="ECO:0000269" key="3">
    <source>
    </source>
</evidence>
<evidence type="ECO:0000269" key="4">
    <source>
    </source>
</evidence>
<evidence type="ECO:0000305" key="5"/>
<evidence type="ECO:0000312" key="6">
    <source>
        <dbReference type="Araport" id="AT3G52730"/>
    </source>
</evidence>
<evidence type="ECO:0000312" key="7">
    <source>
        <dbReference type="EMBL" id="CAB89234.1"/>
    </source>
</evidence>
<evidence type="ECO:0007829" key="8">
    <source>
        <dbReference type="PDB" id="8BEL"/>
    </source>
</evidence>
<reference key="1">
    <citation type="journal article" date="2000" name="Nature">
        <title>Sequence and analysis of chromosome 3 of the plant Arabidopsis thaliana.</title>
        <authorList>
            <person name="Salanoubat M."/>
            <person name="Lemcke K."/>
            <person name="Rieger M."/>
            <person name="Ansorge W."/>
            <person name="Unseld M."/>
            <person name="Fartmann B."/>
            <person name="Valle G."/>
            <person name="Bloecker H."/>
            <person name="Perez-Alonso M."/>
            <person name="Obermaier B."/>
            <person name="Delseny M."/>
            <person name="Boutry M."/>
            <person name="Grivell L.A."/>
            <person name="Mache R."/>
            <person name="Puigdomenech P."/>
            <person name="De Simone V."/>
            <person name="Choisne N."/>
            <person name="Artiguenave F."/>
            <person name="Robert C."/>
            <person name="Brottier P."/>
            <person name="Wincker P."/>
            <person name="Cattolico L."/>
            <person name="Weissenbach J."/>
            <person name="Saurin W."/>
            <person name="Quetier F."/>
            <person name="Schaefer M."/>
            <person name="Mueller-Auer S."/>
            <person name="Gabel C."/>
            <person name="Fuchs M."/>
            <person name="Benes V."/>
            <person name="Wurmbach E."/>
            <person name="Drzonek H."/>
            <person name="Erfle H."/>
            <person name="Jordan N."/>
            <person name="Bangert S."/>
            <person name="Wiedelmann R."/>
            <person name="Kranz H."/>
            <person name="Voss H."/>
            <person name="Holland R."/>
            <person name="Brandt P."/>
            <person name="Nyakatura G."/>
            <person name="Vezzi A."/>
            <person name="D'Angelo M."/>
            <person name="Pallavicini A."/>
            <person name="Toppo S."/>
            <person name="Simionati B."/>
            <person name="Conrad A."/>
            <person name="Hornischer K."/>
            <person name="Kauer G."/>
            <person name="Loehnert T.-H."/>
            <person name="Nordsiek G."/>
            <person name="Reichelt J."/>
            <person name="Scharfe M."/>
            <person name="Schoen O."/>
            <person name="Bargues M."/>
            <person name="Terol J."/>
            <person name="Climent J."/>
            <person name="Navarro P."/>
            <person name="Collado C."/>
            <person name="Perez-Perez A."/>
            <person name="Ottenwaelder B."/>
            <person name="Duchemin D."/>
            <person name="Cooke R."/>
            <person name="Laudie M."/>
            <person name="Berger-Llauro C."/>
            <person name="Purnelle B."/>
            <person name="Masuy D."/>
            <person name="de Haan M."/>
            <person name="Maarse A.C."/>
            <person name="Alcaraz J.-P."/>
            <person name="Cottet A."/>
            <person name="Casacuberta E."/>
            <person name="Monfort A."/>
            <person name="Argiriou A."/>
            <person name="Flores M."/>
            <person name="Liguori R."/>
            <person name="Vitale D."/>
            <person name="Mannhaupt G."/>
            <person name="Haase D."/>
            <person name="Schoof H."/>
            <person name="Rudd S."/>
            <person name="Zaccaria P."/>
            <person name="Mewes H.-W."/>
            <person name="Mayer K.F.X."/>
            <person name="Kaul S."/>
            <person name="Town C.D."/>
            <person name="Koo H.L."/>
            <person name="Tallon L.J."/>
            <person name="Jenkins J."/>
            <person name="Rooney T."/>
            <person name="Rizzo M."/>
            <person name="Walts A."/>
            <person name="Utterback T."/>
            <person name="Fujii C.Y."/>
            <person name="Shea T.P."/>
            <person name="Creasy T.H."/>
            <person name="Haas B."/>
            <person name="Maiti R."/>
            <person name="Wu D."/>
            <person name="Peterson J."/>
            <person name="Van Aken S."/>
            <person name="Pai G."/>
            <person name="Militscher J."/>
            <person name="Sellers P."/>
            <person name="Gill J.E."/>
            <person name="Feldblyum T.V."/>
            <person name="Preuss D."/>
            <person name="Lin X."/>
            <person name="Nierman W.C."/>
            <person name="Salzberg S.L."/>
            <person name="White O."/>
            <person name="Venter J.C."/>
            <person name="Fraser C.M."/>
            <person name="Kaneko T."/>
            <person name="Nakamura Y."/>
            <person name="Sato S."/>
            <person name="Kato T."/>
            <person name="Asamizu E."/>
            <person name="Sasamoto S."/>
            <person name="Kimura T."/>
            <person name="Idesawa K."/>
            <person name="Kawashima K."/>
            <person name="Kishida Y."/>
            <person name="Kiyokawa C."/>
            <person name="Kohara M."/>
            <person name="Matsumoto M."/>
            <person name="Matsuno A."/>
            <person name="Muraki A."/>
            <person name="Nakayama S."/>
            <person name="Nakazaki N."/>
            <person name="Shinpo S."/>
            <person name="Takeuchi C."/>
            <person name="Wada T."/>
            <person name="Watanabe A."/>
            <person name="Yamada M."/>
            <person name="Yasuda M."/>
            <person name="Tabata S."/>
        </authorList>
    </citation>
    <scope>NUCLEOTIDE SEQUENCE [LARGE SCALE GENOMIC DNA]</scope>
    <source>
        <strain>cv. Columbia</strain>
    </source>
</reference>
<reference key="2">
    <citation type="journal article" date="2017" name="Plant J.">
        <title>Araport11: a complete reannotation of the Arabidopsis thaliana reference genome.</title>
        <authorList>
            <person name="Cheng C.Y."/>
            <person name="Krishnakumar V."/>
            <person name="Chan A.P."/>
            <person name="Thibaud-Nissen F."/>
            <person name="Schobel S."/>
            <person name="Town C.D."/>
        </authorList>
    </citation>
    <scope>GENOME REANNOTATION</scope>
    <source>
        <strain>cv. Columbia</strain>
    </source>
</reference>
<reference key="3">
    <citation type="journal article" date="2003" name="Science">
        <title>Empirical analysis of transcriptional activity in the Arabidopsis genome.</title>
        <authorList>
            <person name="Yamada K."/>
            <person name="Lim J."/>
            <person name="Dale J.M."/>
            <person name="Chen H."/>
            <person name="Shinn P."/>
            <person name="Palm C.J."/>
            <person name="Southwick A.M."/>
            <person name="Wu H.C."/>
            <person name="Kim C.J."/>
            <person name="Nguyen M."/>
            <person name="Pham P.K."/>
            <person name="Cheuk R.F."/>
            <person name="Karlin-Newmann G."/>
            <person name="Liu S.X."/>
            <person name="Lam B."/>
            <person name="Sakano H."/>
            <person name="Wu T."/>
            <person name="Yu G."/>
            <person name="Miranda M."/>
            <person name="Quach H.L."/>
            <person name="Tripp M."/>
            <person name="Chang C.H."/>
            <person name="Lee J.M."/>
            <person name="Toriumi M.J."/>
            <person name="Chan M.M."/>
            <person name="Tang C.C."/>
            <person name="Onodera C.S."/>
            <person name="Deng J.M."/>
            <person name="Akiyama K."/>
            <person name="Ansari Y."/>
            <person name="Arakawa T."/>
            <person name="Banh J."/>
            <person name="Banno F."/>
            <person name="Bowser L."/>
            <person name="Brooks S.Y."/>
            <person name="Carninci P."/>
            <person name="Chao Q."/>
            <person name="Choy N."/>
            <person name="Enju A."/>
            <person name="Goldsmith A.D."/>
            <person name="Gurjal M."/>
            <person name="Hansen N.F."/>
            <person name="Hayashizaki Y."/>
            <person name="Johnson-Hopson C."/>
            <person name="Hsuan V.W."/>
            <person name="Iida K."/>
            <person name="Karnes M."/>
            <person name="Khan S."/>
            <person name="Koesema E."/>
            <person name="Ishida J."/>
            <person name="Jiang P.X."/>
            <person name="Jones T."/>
            <person name="Kawai J."/>
            <person name="Kamiya A."/>
            <person name="Meyers C."/>
            <person name="Nakajima M."/>
            <person name="Narusaka M."/>
            <person name="Seki M."/>
            <person name="Sakurai T."/>
            <person name="Satou M."/>
            <person name="Tamse R."/>
            <person name="Vaysberg M."/>
            <person name="Wallender E.K."/>
            <person name="Wong C."/>
            <person name="Yamamura Y."/>
            <person name="Yuan S."/>
            <person name="Shinozaki K."/>
            <person name="Davis R.W."/>
            <person name="Theologis A."/>
            <person name="Ecker J.R."/>
        </authorList>
    </citation>
    <scope>NUCLEOTIDE SEQUENCE [LARGE SCALE MRNA]</scope>
    <source>
        <strain>cv. Columbia</strain>
    </source>
</reference>
<reference key="4">
    <citation type="journal article" date="2003" name="Plant Physiol.">
        <title>New insights into the respiratory chain of plant mitochondria. Supercomplexes and a unique composition of complex II.</title>
        <authorList>
            <person name="Eubel H."/>
            <person name="Jansch L."/>
            <person name="Braun H.P."/>
        </authorList>
    </citation>
    <scope>SUBUNIT</scope>
</reference>
<reference key="5">
    <citation type="journal article" date="2008" name="J. Proteome Res.">
        <title>Resolving and identifying protein components of plant mitochondrial respiratory complexes using three dimensions of gel electrophoresis.</title>
        <authorList>
            <person name="Meyer E.H."/>
            <person name="Taylor N.L."/>
            <person name="Millar A.H."/>
        </authorList>
    </citation>
    <scope>SUBCELLULAR LOCATION</scope>
    <scope>SUBUNIT</scope>
    <scope>IDENTIFICATION BY MASS SPECTROMETRY</scope>
</reference>
<comment type="function">
    <text evidence="1">Component of the ubiquinol-cytochrome c oxidoreductase, a multisubunit transmembrane complex that is part of the mitochondrial electron transport chain which drives oxidative phosphorylation. The respiratory chain contains 3 multisubunit complexes succinate dehydrogenase (complex II, CII), ubiquinol-cytochrome c oxidoreductase (cytochrome b-c1 complex, complex III, CIII) and cytochrome c oxidase (complex IV, CIV), that cooperate to transfer electrons derived from NADH and succinate to molecular oxygen, creating an electrochemical gradient over the inner membrane that drives transmembrane transport and the ATP synthase. The cytochrome b-c1 complex catalyzes electron transfer from ubiquinol to cytochrome c, linking this redox reaction to translocation of protons across the mitochondrial inner membrane, with protons being carried across the membrane as hydrogens on the quinol. In the process called Q cycle, 2 protons are consumed from the matrix, 4 protons are released into the intermembrane space and 2 electrons are passed to cytochrome c.</text>
</comment>
<comment type="subunit">
    <text evidence="3 4">Component of the ubiquinol-cytochrome c oxidoreductase (cytochrome b-c1 complex, complex III, CIII), a multisubunit enzyme composed of 10 subunits. The complex is composed of 3 respiratory subunits cytochrome b (MT-CYB), cytochrome c1 (CYC1-1 or CYC1-2) and Rieske protein (UCR1-1 or UCR1-2), 2 core protein subunits MPPalpha1 (or MPPalpha2) and MPPB, and 5 low-molecular weight protein subunits QCR7-1 (or QCR7-2), UCRQ-1 (or UCRQ-2), QCR9, UCRY and probably QCR6-1 (or QCR6-2) (PubMed:18189341). The complex exists as an obligatory dimer and forms supercomplexes (SCs) in the inner mitochondrial membrane with NADH-ubiquinone oxidoreductase (complex I, CI), resulting in different assemblies (supercomplexes SCI(1)III(2) and SCI(2)III(4)) (PubMed:12970493).</text>
</comment>
<comment type="subcellular location">
    <subcellularLocation>
        <location evidence="1">Mitochondrion inner membrane</location>
        <topology evidence="1">Single-pass membrane protein</topology>
    </subcellularLocation>
</comment>
<comment type="similarity">
    <text evidence="5">Belongs to the UQCR10/QCR9 family.</text>
</comment>
<name>QCR9_ARATH</name>